<comment type="function">
    <text evidence="1">Catalyzes the radical-mediated insertion of two sulfur atoms into the C-6 and C-8 positions of the octanoyl moiety bound to the lipoyl domains of lipoate-dependent enzymes, thereby converting the octanoylated domains into lipoylated derivatives.</text>
</comment>
<comment type="catalytic activity">
    <reaction>
        <text>[[Fe-S] cluster scaffold protein carrying a second [4Fe-4S](2+) cluster] + N(6)-octanoyl-L-lysyl-[protein] + 2 oxidized [2Fe-2S]-[ferredoxin] + 2 S-adenosyl-L-methionine + 4 H(+) = [[Fe-S] cluster scaffold protein] + N(6)-[(R)-dihydrolipoyl]-L-lysyl-[protein] + 4 Fe(3+) + 2 hydrogen sulfide + 2 5'-deoxyadenosine + 2 L-methionine + 2 reduced [2Fe-2S]-[ferredoxin]</text>
        <dbReference type="Rhea" id="RHEA:16585"/>
        <dbReference type="Rhea" id="RHEA-COMP:9928"/>
        <dbReference type="Rhea" id="RHEA-COMP:10000"/>
        <dbReference type="Rhea" id="RHEA-COMP:10001"/>
        <dbReference type="Rhea" id="RHEA-COMP:10475"/>
        <dbReference type="Rhea" id="RHEA-COMP:14568"/>
        <dbReference type="Rhea" id="RHEA-COMP:14569"/>
        <dbReference type="ChEBI" id="CHEBI:15378"/>
        <dbReference type="ChEBI" id="CHEBI:17319"/>
        <dbReference type="ChEBI" id="CHEBI:29034"/>
        <dbReference type="ChEBI" id="CHEBI:29919"/>
        <dbReference type="ChEBI" id="CHEBI:33722"/>
        <dbReference type="ChEBI" id="CHEBI:33737"/>
        <dbReference type="ChEBI" id="CHEBI:33738"/>
        <dbReference type="ChEBI" id="CHEBI:57844"/>
        <dbReference type="ChEBI" id="CHEBI:59789"/>
        <dbReference type="ChEBI" id="CHEBI:78809"/>
        <dbReference type="ChEBI" id="CHEBI:83100"/>
        <dbReference type="EC" id="2.8.1.8"/>
    </reaction>
</comment>
<comment type="cofactor">
    <cofactor evidence="1">
        <name>[4Fe-4S] cluster</name>
        <dbReference type="ChEBI" id="CHEBI:49883"/>
    </cofactor>
    <text evidence="1">Binds 2 [4Fe-4S] clusters per subunit. One cluster is coordinated with 3 cysteines and an exchangeable S-adenosyl-L-methionine.</text>
</comment>
<comment type="pathway">
    <text>Protein modification; protein lipoylation via endogenous pathway; protein N(6)-(lipoyl)lysine from octanoyl-[acyl-carrier-protein]: step 2/2.</text>
</comment>
<comment type="subcellular location">
    <subcellularLocation>
        <location evidence="1">Mitochondrion</location>
    </subcellularLocation>
</comment>
<comment type="similarity">
    <text evidence="4">Belongs to the radical SAM superfamily. Lipoyl synthase family.</text>
</comment>
<organism>
    <name type="scientific">Ricinus communis</name>
    <name type="common">Castor bean</name>
    <dbReference type="NCBI Taxonomy" id="3988"/>
    <lineage>
        <taxon>Eukaryota</taxon>
        <taxon>Viridiplantae</taxon>
        <taxon>Streptophyta</taxon>
        <taxon>Embryophyta</taxon>
        <taxon>Tracheophyta</taxon>
        <taxon>Spermatophyta</taxon>
        <taxon>Magnoliopsida</taxon>
        <taxon>eudicotyledons</taxon>
        <taxon>Gunneridae</taxon>
        <taxon>Pentapetalae</taxon>
        <taxon>rosids</taxon>
        <taxon>fabids</taxon>
        <taxon>Malpighiales</taxon>
        <taxon>Euphorbiaceae</taxon>
        <taxon>Acalyphoideae</taxon>
        <taxon>Acalypheae</taxon>
        <taxon>Ricinus</taxon>
    </lineage>
</organism>
<accession>B9RW49</accession>
<gene>
    <name type="primary">LIP1</name>
    <name type="ORF">RCOM_1176060</name>
</gene>
<evidence type="ECO:0000250" key="1"/>
<evidence type="ECO:0000255" key="2"/>
<evidence type="ECO:0000255" key="3">
    <source>
        <dbReference type="PROSITE-ProRule" id="PRU01266"/>
    </source>
</evidence>
<evidence type="ECO:0000305" key="4"/>
<name>LIAS_RICCO</name>
<sequence length="348" mass="38584">MFQSRFTILIRTLNSSKSRHFSSTIEPTKPQFPQTLAGLRARLAAESPSLSEFSDLQSNNSYSVEVGTKKKPLPKPKWMREAIPGGDKYVQIKKKLRELKLHTVCEEAKCPNLGECWSGGETGTATATIMILGDTCTRGCRFCNVKTSRTPPPPDPDEPANVAEAIASWGLDYVVITSVDRDDLPDQGSNHFAQTVQKLKALKPHMLIEALVPDFRGDPGCVENVAKSGLDVFAHNIETVEDLQSVIRDHRANFKQSLDVLMMAKDHAPKGTLTKTSIMLGCGETPEQVVKTMEKVRAAGVDVMTFGQYMRPSKRHMPVSEYVTPEAFEQYRTXXLVSYVLFSLLISV</sequence>
<feature type="transit peptide" description="Mitochondrion" evidence="2">
    <location>
        <begin position="1"/>
        <end status="unknown"/>
    </location>
</feature>
<feature type="chain" id="PRO_0000398855" description="Lipoyl synthase, mitochondrial">
    <location>
        <begin status="unknown"/>
        <end position="348"/>
    </location>
</feature>
<feature type="domain" description="Radical SAM core" evidence="3">
    <location>
        <begin position="121"/>
        <end position="341"/>
    </location>
</feature>
<feature type="binding site" evidence="1">
    <location>
        <position position="105"/>
    </location>
    <ligand>
        <name>[4Fe-4S] cluster</name>
        <dbReference type="ChEBI" id="CHEBI:49883"/>
        <label>1</label>
    </ligand>
</feature>
<feature type="binding site" evidence="1">
    <location>
        <position position="110"/>
    </location>
    <ligand>
        <name>[4Fe-4S] cluster</name>
        <dbReference type="ChEBI" id="CHEBI:49883"/>
        <label>1</label>
    </ligand>
</feature>
<feature type="binding site" evidence="1">
    <location>
        <position position="116"/>
    </location>
    <ligand>
        <name>[4Fe-4S] cluster</name>
        <dbReference type="ChEBI" id="CHEBI:49883"/>
        <label>1</label>
    </ligand>
</feature>
<feature type="binding site" evidence="1">
    <location>
        <position position="136"/>
    </location>
    <ligand>
        <name>[4Fe-4S] cluster</name>
        <dbReference type="ChEBI" id="CHEBI:49883"/>
        <label>2</label>
        <note>4Fe-4S-S-AdoMet</note>
    </ligand>
</feature>
<feature type="binding site" evidence="1">
    <location>
        <position position="140"/>
    </location>
    <ligand>
        <name>[4Fe-4S] cluster</name>
        <dbReference type="ChEBI" id="CHEBI:49883"/>
        <label>2</label>
        <note>4Fe-4S-S-AdoMet</note>
    </ligand>
</feature>
<feature type="binding site" evidence="1">
    <location>
        <position position="143"/>
    </location>
    <ligand>
        <name>[4Fe-4S] cluster</name>
        <dbReference type="ChEBI" id="CHEBI:49883"/>
        <label>2</label>
        <note>4Fe-4S-S-AdoMet</note>
    </ligand>
</feature>
<proteinExistence type="inferred from homology"/>
<dbReference type="EC" id="2.8.1.8"/>
<dbReference type="EMBL" id="EQ973822">
    <property type="protein sequence ID" value="EEF44486.1"/>
    <property type="molecule type" value="Genomic_DNA"/>
</dbReference>
<dbReference type="FunCoup" id="B9RW49">
    <property type="interactions" value="871"/>
</dbReference>
<dbReference type="STRING" id="3988.B9RW49"/>
<dbReference type="eggNOG" id="KOG2672">
    <property type="taxonomic scope" value="Eukaryota"/>
</dbReference>
<dbReference type="InParanoid" id="B9RW49"/>
<dbReference type="UniPathway" id="UPA00538">
    <property type="reaction ID" value="UER00593"/>
</dbReference>
<dbReference type="Proteomes" id="UP000008311">
    <property type="component" value="Unassembled WGS sequence"/>
</dbReference>
<dbReference type="GO" id="GO:0005739">
    <property type="term" value="C:mitochondrion"/>
    <property type="evidence" value="ECO:0000318"/>
    <property type="project" value="GO_Central"/>
</dbReference>
<dbReference type="GO" id="GO:0051539">
    <property type="term" value="F:4 iron, 4 sulfur cluster binding"/>
    <property type="evidence" value="ECO:0007669"/>
    <property type="project" value="UniProtKB-UniRule"/>
</dbReference>
<dbReference type="GO" id="GO:0016992">
    <property type="term" value="F:lipoate synthase activity"/>
    <property type="evidence" value="ECO:0000318"/>
    <property type="project" value="GO_Central"/>
</dbReference>
<dbReference type="GO" id="GO:0046872">
    <property type="term" value="F:metal ion binding"/>
    <property type="evidence" value="ECO:0007669"/>
    <property type="project" value="UniProtKB-KW"/>
</dbReference>
<dbReference type="GO" id="GO:0009107">
    <property type="term" value="P:lipoate biosynthetic process"/>
    <property type="evidence" value="ECO:0000318"/>
    <property type="project" value="GO_Central"/>
</dbReference>
<dbReference type="CDD" id="cd01335">
    <property type="entry name" value="Radical_SAM"/>
    <property type="match status" value="1"/>
</dbReference>
<dbReference type="FunFam" id="3.20.20.70:FF:000125">
    <property type="entry name" value="Lipoyl synthase, mitochondrial"/>
    <property type="match status" value="1"/>
</dbReference>
<dbReference type="Gene3D" id="3.20.20.70">
    <property type="entry name" value="Aldolase class I"/>
    <property type="match status" value="1"/>
</dbReference>
<dbReference type="HAMAP" id="MF_00206">
    <property type="entry name" value="Lipoyl_synth"/>
    <property type="match status" value="1"/>
</dbReference>
<dbReference type="InterPro" id="IPR013785">
    <property type="entry name" value="Aldolase_TIM"/>
</dbReference>
<dbReference type="InterPro" id="IPR006638">
    <property type="entry name" value="Elp3/MiaA/NifB-like_rSAM"/>
</dbReference>
<dbReference type="InterPro" id="IPR031691">
    <property type="entry name" value="LIAS_N"/>
</dbReference>
<dbReference type="InterPro" id="IPR003698">
    <property type="entry name" value="Lipoyl_synth"/>
</dbReference>
<dbReference type="InterPro" id="IPR007197">
    <property type="entry name" value="rSAM"/>
</dbReference>
<dbReference type="NCBIfam" id="TIGR00510">
    <property type="entry name" value="lipA"/>
    <property type="match status" value="1"/>
</dbReference>
<dbReference type="NCBIfam" id="NF004019">
    <property type="entry name" value="PRK05481.1"/>
    <property type="match status" value="1"/>
</dbReference>
<dbReference type="NCBIfam" id="NF009544">
    <property type="entry name" value="PRK12928.1"/>
    <property type="match status" value="1"/>
</dbReference>
<dbReference type="PANTHER" id="PTHR10949">
    <property type="entry name" value="LIPOYL SYNTHASE"/>
    <property type="match status" value="1"/>
</dbReference>
<dbReference type="PANTHER" id="PTHR10949:SF0">
    <property type="entry name" value="LIPOYL SYNTHASE, MITOCHONDRIAL"/>
    <property type="match status" value="1"/>
</dbReference>
<dbReference type="Pfam" id="PF16881">
    <property type="entry name" value="LIAS_N"/>
    <property type="match status" value="1"/>
</dbReference>
<dbReference type="Pfam" id="PF04055">
    <property type="entry name" value="Radical_SAM"/>
    <property type="match status" value="1"/>
</dbReference>
<dbReference type="SFLD" id="SFLDF00271">
    <property type="entry name" value="lipoyl_synthase"/>
    <property type="match status" value="1"/>
</dbReference>
<dbReference type="SFLD" id="SFLDG01058">
    <property type="entry name" value="lipoyl_synthase_like"/>
    <property type="match status" value="1"/>
</dbReference>
<dbReference type="SMART" id="SM00729">
    <property type="entry name" value="Elp3"/>
    <property type="match status" value="1"/>
</dbReference>
<dbReference type="SUPFAM" id="SSF102114">
    <property type="entry name" value="Radical SAM enzymes"/>
    <property type="match status" value="1"/>
</dbReference>
<dbReference type="PROSITE" id="PS51918">
    <property type="entry name" value="RADICAL_SAM"/>
    <property type="match status" value="1"/>
</dbReference>
<protein>
    <recommendedName>
        <fullName>Lipoyl synthase, mitochondrial</fullName>
        <ecNumber>2.8.1.8</ecNumber>
    </recommendedName>
    <alternativeName>
        <fullName>Lipoate synthase</fullName>
        <shortName>LS</shortName>
        <shortName>Lip-syn</shortName>
    </alternativeName>
    <alternativeName>
        <fullName>Lipoic acid synthase</fullName>
    </alternativeName>
</protein>
<reference key="1">
    <citation type="journal article" date="2010" name="Nat. Biotechnol.">
        <title>Draft genome sequence of the oilseed species Ricinus communis.</title>
        <authorList>
            <person name="Chan A.P."/>
            <person name="Crabtree J."/>
            <person name="Zhao Q."/>
            <person name="Lorenzi H."/>
            <person name="Orvis J."/>
            <person name="Puiu D."/>
            <person name="Melake-Berhan A."/>
            <person name="Jones K.M."/>
            <person name="Redman J."/>
            <person name="Chen G."/>
            <person name="Cahoon E.B."/>
            <person name="Gedil M."/>
            <person name="Stanke M."/>
            <person name="Haas B.J."/>
            <person name="Wortman J.R."/>
            <person name="Fraser-Liggett C.M."/>
            <person name="Ravel J."/>
            <person name="Rabinowicz P.D."/>
        </authorList>
    </citation>
    <scope>NUCLEOTIDE SEQUENCE [LARGE SCALE GENOMIC DNA]</scope>
    <source>
        <strain>cv. Hale</strain>
    </source>
</reference>
<keyword id="KW-0004">4Fe-4S</keyword>
<keyword id="KW-0408">Iron</keyword>
<keyword id="KW-0411">Iron-sulfur</keyword>
<keyword id="KW-0479">Metal-binding</keyword>
<keyword id="KW-0496">Mitochondrion</keyword>
<keyword id="KW-1185">Reference proteome</keyword>
<keyword id="KW-0949">S-adenosyl-L-methionine</keyword>
<keyword id="KW-0808">Transferase</keyword>
<keyword id="KW-0809">Transit peptide</keyword>